<reference key="1">
    <citation type="journal article" date="2004" name="Nat. Genet.">
        <title>Comparison of genome degradation in Paratyphi A and Typhi, human-restricted serovars of Salmonella enterica that cause typhoid.</title>
        <authorList>
            <person name="McClelland M."/>
            <person name="Sanderson K.E."/>
            <person name="Clifton S.W."/>
            <person name="Latreille P."/>
            <person name="Porwollik S."/>
            <person name="Sabo A."/>
            <person name="Meyer R."/>
            <person name="Bieri T."/>
            <person name="Ozersky P."/>
            <person name="McLellan M."/>
            <person name="Harkins C.R."/>
            <person name="Wang C."/>
            <person name="Nguyen C."/>
            <person name="Berghoff A."/>
            <person name="Elliott G."/>
            <person name="Kohlberg S."/>
            <person name="Strong C."/>
            <person name="Du F."/>
            <person name="Carter J."/>
            <person name="Kremizki C."/>
            <person name="Layman D."/>
            <person name="Leonard S."/>
            <person name="Sun H."/>
            <person name="Fulton L."/>
            <person name="Nash W."/>
            <person name="Miner T."/>
            <person name="Minx P."/>
            <person name="Delehaunty K."/>
            <person name="Fronick C."/>
            <person name="Magrini V."/>
            <person name="Nhan M."/>
            <person name="Warren W."/>
            <person name="Florea L."/>
            <person name="Spieth J."/>
            <person name="Wilson R.K."/>
        </authorList>
    </citation>
    <scope>NUCLEOTIDE SEQUENCE [LARGE SCALE GENOMIC DNA]</scope>
    <source>
        <strain>ATCC 9150 / SARB42</strain>
    </source>
</reference>
<keyword id="KW-0378">Hydrolase</keyword>
<keyword id="KW-0479">Metal-binding</keyword>
<keyword id="KW-0665">Pyrimidine biosynthesis</keyword>
<keyword id="KW-0862">Zinc</keyword>
<gene>
    <name evidence="1" type="primary">pyrC</name>
    <name type="ordered locus">SPA1688</name>
</gene>
<feature type="chain" id="PRO_1000024049" description="Dihydroorotase">
    <location>
        <begin position="1"/>
        <end position="348"/>
    </location>
</feature>
<feature type="active site" evidence="1">
    <location>
        <position position="251"/>
    </location>
</feature>
<feature type="binding site" evidence="1">
    <location>
        <position position="17"/>
    </location>
    <ligand>
        <name>Zn(2+)</name>
        <dbReference type="ChEBI" id="CHEBI:29105"/>
        <label>1</label>
    </ligand>
</feature>
<feature type="binding site" evidence="1">
    <location>
        <begin position="19"/>
        <end position="21"/>
    </location>
    <ligand>
        <name>substrate</name>
    </ligand>
</feature>
<feature type="binding site" evidence="1">
    <location>
        <position position="19"/>
    </location>
    <ligand>
        <name>Zn(2+)</name>
        <dbReference type="ChEBI" id="CHEBI:29105"/>
        <label>1</label>
    </ligand>
</feature>
<feature type="binding site" evidence="1">
    <location>
        <position position="45"/>
    </location>
    <ligand>
        <name>substrate</name>
    </ligand>
</feature>
<feature type="binding site" description="via carbamate group" evidence="1">
    <location>
        <position position="103"/>
    </location>
    <ligand>
        <name>Zn(2+)</name>
        <dbReference type="ChEBI" id="CHEBI:29105"/>
        <label>1</label>
    </ligand>
</feature>
<feature type="binding site" description="via carbamate group" evidence="1">
    <location>
        <position position="103"/>
    </location>
    <ligand>
        <name>Zn(2+)</name>
        <dbReference type="ChEBI" id="CHEBI:29105"/>
        <label>2</label>
    </ligand>
</feature>
<feature type="binding site" evidence="1">
    <location>
        <position position="140"/>
    </location>
    <ligand>
        <name>substrate</name>
    </ligand>
</feature>
<feature type="binding site" evidence="1">
    <location>
        <position position="140"/>
    </location>
    <ligand>
        <name>Zn(2+)</name>
        <dbReference type="ChEBI" id="CHEBI:29105"/>
        <label>2</label>
    </ligand>
</feature>
<feature type="binding site" evidence="1">
    <location>
        <position position="178"/>
    </location>
    <ligand>
        <name>Zn(2+)</name>
        <dbReference type="ChEBI" id="CHEBI:29105"/>
        <label>2</label>
    </ligand>
</feature>
<feature type="binding site" evidence="1">
    <location>
        <position position="223"/>
    </location>
    <ligand>
        <name>substrate</name>
    </ligand>
</feature>
<feature type="binding site" evidence="1">
    <location>
        <position position="251"/>
    </location>
    <ligand>
        <name>Zn(2+)</name>
        <dbReference type="ChEBI" id="CHEBI:29105"/>
        <label>1</label>
    </ligand>
</feature>
<feature type="binding site" evidence="1">
    <location>
        <position position="255"/>
    </location>
    <ligand>
        <name>substrate</name>
    </ligand>
</feature>
<feature type="binding site" evidence="1">
    <location>
        <position position="267"/>
    </location>
    <ligand>
        <name>substrate</name>
    </ligand>
</feature>
<feature type="modified residue" description="N6-carboxylysine" evidence="1">
    <location>
        <position position="103"/>
    </location>
</feature>
<evidence type="ECO:0000255" key="1">
    <source>
        <dbReference type="HAMAP-Rule" id="MF_00219"/>
    </source>
</evidence>
<sequence>MTAPSQVLKIRRPDDWHVHLRDGDMLKTVVPYTSEIYGRAIVMPNLASPITTVDAAIAYRQRILDAVPAGHDFTPLMTCYLTDSLDADELERGFHEGVFTAAKLYPANATTNSSHGVTSVDAIMPVLERMEKLGMPLLVHGEVTHADVDIFDREARFIDTVMEPLRQRLTALKVVFEHITTKDAAQYVRDGSDNLAATITPQHLMFNRNDMLVGGIRPHLYCLPILKRNIHQQALRDLVASGFTRAFLGTDSAPHSRHRKETRCGCAGCFNAPSALGSYAAVFEEMNALAHFEAFCSLNGPQFYGLPVNTGWVELVRDEQQIPENIALADDSLVPFLAGETVRWSVKK</sequence>
<organism>
    <name type="scientific">Salmonella paratyphi A (strain ATCC 9150 / SARB42)</name>
    <dbReference type="NCBI Taxonomy" id="295319"/>
    <lineage>
        <taxon>Bacteria</taxon>
        <taxon>Pseudomonadati</taxon>
        <taxon>Pseudomonadota</taxon>
        <taxon>Gammaproteobacteria</taxon>
        <taxon>Enterobacterales</taxon>
        <taxon>Enterobacteriaceae</taxon>
        <taxon>Salmonella</taxon>
    </lineage>
</organism>
<name>PYRC_SALPA</name>
<dbReference type="EC" id="3.5.2.3" evidence="1"/>
<dbReference type="EMBL" id="CP000026">
    <property type="protein sequence ID" value="AAV77612.1"/>
    <property type="molecule type" value="Genomic_DNA"/>
</dbReference>
<dbReference type="RefSeq" id="WP_000126589.1">
    <property type="nucleotide sequence ID" value="NC_006511.1"/>
</dbReference>
<dbReference type="SMR" id="Q5PGW5"/>
<dbReference type="KEGG" id="spt:SPA1688"/>
<dbReference type="HOGENOM" id="CLU_041558_1_0_6"/>
<dbReference type="UniPathway" id="UPA00070">
    <property type="reaction ID" value="UER00117"/>
</dbReference>
<dbReference type="Proteomes" id="UP000008185">
    <property type="component" value="Chromosome"/>
</dbReference>
<dbReference type="GO" id="GO:0005829">
    <property type="term" value="C:cytosol"/>
    <property type="evidence" value="ECO:0007669"/>
    <property type="project" value="TreeGrafter"/>
</dbReference>
<dbReference type="GO" id="GO:0004151">
    <property type="term" value="F:dihydroorotase activity"/>
    <property type="evidence" value="ECO:0007669"/>
    <property type="project" value="UniProtKB-UniRule"/>
</dbReference>
<dbReference type="GO" id="GO:0008270">
    <property type="term" value="F:zinc ion binding"/>
    <property type="evidence" value="ECO:0007669"/>
    <property type="project" value="UniProtKB-UniRule"/>
</dbReference>
<dbReference type="GO" id="GO:0006207">
    <property type="term" value="P:'de novo' pyrimidine nucleobase biosynthetic process"/>
    <property type="evidence" value="ECO:0007669"/>
    <property type="project" value="TreeGrafter"/>
</dbReference>
<dbReference type="GO" id="GO:0044205">
    <property type="term" value="P:'de novo' UMP biosynthetic process"/>
    <property type="evidence" value="ECO:0007669"/>
    <property type="project" value="UniProtKB-UniRule"/>
</dbReference>
<dbReference type="CDD" id="cd01294">
    <property type="entry name" value="DHOase"/>
    <property type="match status" value="1"/>
</dbReference>
<dbReference type="FunFam" id="3.20.20.140:FF:000006">
    <property type="entry name" value="Dihydroorotase"/>
    <property type="match status" value="1"/>
</dbReference>
<dbReference type="Gene3D" id="3.20.20.140">
    <property type="entry name" value="Metal-dependent hydrolases"/>
    <property type="match status" value="1"/>
</dbReference>
<dbReference type="HAMAP" id="MF_00219">
    <property type="entry name" value="PyrC_classII"/>
    <property type="match status" value="1"/>
</dbReference>
<dbReference type="InterPro" id="IPR006680">
    <property type="entry name" value="Amidohydro-rel"/>
</dbReference>
<dbReference type="InterPro" id="IPR004721">
    <property type="entry name" value="DHOdimr"/>
</dbReference>
<dbReference type="InterPro" id="IPR002195">
    <property type="entry name" value="Dihydroorotase_CS"/>
</dbReference>
<dbReference type="InterPro" id="IPR032466">
    <property type="entry name" value="Metal_Hydrolase"/>
</dbReference>
<dbReference type="NCBIfam" id="TIGR00856">
    <property type="entry name" value="pyrC_dimer"/>
    <property type="match status" value="1"/>
</dbReference>
<dbReference type="PANTHER" id="PTHR43137">
    <property type="entry name" value="DIHYDROOROTASE"/>
    <property type="match status" value="1"/>
</dbReference>
<dbReference type="PANTHER" id="PTHR43137:SF1">
    <property type="entry name" value="DIHYDROOROTASE"/>
    <property type="match status" value="1"/>
</dbReference>
<dbReference type="Pfam" id="PF01979">
    <property type="entry name" value="Amidohydro_1"/>
    <property type="match status" value="1"/>
</dbReference>
<dbReference type="PIRSF" id="PIRSF001237">
    <property type="entry name" value="DHOdimr"/>
    <property type="match status" value="1"/>
</dbReference>
<dbReference type="SUPFAM" id="SSF51556">
    <property type="entry name" value="Metallo-dependent hydrolases"/>
    <property type="match status" value="1"/>
</dbReference>
<dbReference type="PROSITE" id="PS00482">
    <property type="entry name" value="DIHYDROOROTASE_1"/>
    <property type="match status" value="1"/>
</dbReference>
<dbReference type="PROSITE" id="PS00483">
    <property type="entry name" value="DIHYDROOROTASE_2"/>
    <property type="match status" value="1"/>
</dbReference>
<protein>
    <recommendedName>
        <fullName evidence="1">Dihydroorotase</fullName>
        <shortName evidence="1">DHOase</shortName>
        <ecNumber evidence="1">3.5.2.3</ecNumber>
    </recommendedName>
</protein>
<proteinExistence type="inferred from homology"/>
<accession>Q5PGW5</accession>
<comment type="function">
    <text evidence="1">Catalyzes the reversible cyclization of carbamoyl aspartate to dihydroorotate.</text>
</comment>
<comment type="catalytic activity">
    <reaction evidence="1">
        <text>(S)-dihydroorotate + H2O = N-carbamoyl-L-aspartate + H(+)</text>
        <dbReference type="Rhea" id="RHEA:24296"/>
        <dbReference type="ChEBI" id="CHEBI:15377"/>
        <dbReference type="ChEBI" id="CHEBI:15378"/>
        <dbReference type="ChEBI" id="CHEBI:30864"/>
        <dbReference type="ChEBI" id="CHEBI:32814"/>
        <dbReference type="EC" id="3.5.2.3"/>
    </reaction>
</comment>
<comment type="cofactor">
    <cofactor evidence="1">
        <name>Zn(2+)</name>
        <dbReference type="ChEBI" id="CHEBI:29105"/>
    </cofactor>
    <text evidence="1">Binds 2 Zn(2+) ions per subunit.</text>
</comment>
<comment type="pathway">
    <text evidence="1">Pyrimidine metabolism; UMP biosynthesis via de novo pathway; (S)-dihydroorotate from bicarbonate: step 3/3.</text>
</comment>
<comment type="subunit">
    <text evidence="1">Homodimer.</text>
</comment>
<comment type="similarity">
    <text evidence="1">Belongs to the metallo-dependent hydrolases superfamily. DHOase family. Class II DHOase subfamily.</text>
</comment>